<accession>P16667</accession>
<protein>
    <recommendedName>
        <fullName evidence="2">Type II restriction enzyme Sau3AI</fullName>
        <shortName evidence="3">R.Sau3AI</shortName>
        <ecNumber evidence="1">3.1.21.4</ecNumber>
    </recommendedName>
    <alternativeName>
        <fullName>Endonuclease Sau3AI</fullName>
    </alternativeName>
    <alternativeName>
        <fullName>Type-2 restriction enzyme Sau3AI</fullName>
    </alternativeName>
</protein>
<name>T2S3_STAAU</name>
<reference key="1">
    <citation type="journal article" date="1990" name="Gene">
        <title>Cloning, expression and characterization of the Sau3AI restriction and modification genes in Staphylococcus carnosus TM300.</title>
        <authorList>
            <person name="Seeber S."/>
            <person name="Kessler C."/>
            <person name="Goetz F."/>
        </authorList>
    </citation>
    <scope>NUCLEOTIDE SEQUENCE [GENOMIC DNA]</scope>
    <scope>FUNCTION</scope>
    <scope>CATALYTIC ACTIVITY</scope>
    <source>
        <strain>ATCC 49834 / 3A</strain>
    </source>
</reference>
<reference key="2">
    <citation type="journal article" date="2003" name="Nucleic Acids Res.">
        <title>A nomenclature for restriction enzymes, DNA methyltransferases, homing endonucleases and their genes.</title>
        <authorList>
            <person name="Roberts R.J."/>
            <person name="Belfort M."/>
            <person name="Bestor T."/>
            <person name="Bhagwat A.S."/>
            <person name="Bickle T.A."/>
            <person name="Bitinaite J."/>
            <person name="Blumenthal R.M."/>
            <person name="Degtyarev S.K."/>
            <person name="Dryden D.T."/>
            <person name="Dybvig K."/>
            <person name="Firman K."/>
            <person name="Gromova E.S."/>
            <person name="Gumport R.I."/>
            <person name="Halford S.E."/>
            <person name="Hattman S."/>
            <person name="Heitman J."/>
            <person name="Hornby D.P."/>
            <person name="Janulaitis A."/>
            <person name="Jeltsch A."/>
            <person name="Josephsen J."/>
            <person name="Kiss A."/>
            <person name="Klaenhammer T.R."/>
            <person name="Kobayashi I."/>
            <person name="Kong H."/>
            <person name="Krueger D.H."/>
            <person name="Lacks S."/>
            <person name="Marinus M.G."/>
            <person name="Miyahara M."/>
            <person name="Morgan R.D."/>
            <person name="Murray N.E."/>
            <person name="Nagaraja V."/>
            <person name="Piekarowicz A."/>
            <person name="Pingoud A."/>
            <person name="Raleigh E."/>
            <person name="Rao D.N."/>
            <person name="Reich N."/>
            <person name="Repin V.E."/>
            <person name="Selker E.U."/>
            <person name="Shaw P.C."/>
            <person name="Stein D.C."/>
            <person name="Stoddard B.L."/>
            <person name="Szybalski W."/>
            <person name="Trautner T.A."/>
            <person name="Van Etten J.L."/>
            <person name="Vitor J.M."/>
            <person name="Wilson G.G."/>
            <person name="Xu S.Y."/>
        </authorList>
    </citation>
    <scope>NOMENCLATURE</scope>
    <scope>SUBTYPES</scope>
</reference>
<evidence type="ECO:0000269" key="1">
    <source>
    </source>
</evidence>
<evidence type="ECO:0000303" key="2">
    <source>
    </source>
</evidence>
<evidence type="ECO:0000303" key="3">
    <source>
    </source>
</evidence>
<evidence type="ECO:0007829" key="4">
    <source>
        <dbReference type="PDB" id="2REU"/>
    </source>
</evidence>
<evidence type="ECO:0007829" key="5">
    <source>
        <dbReference type="PDB" id="4PXG"/>
    </source>
</evidence>
<evidence type="ECO:0007829" key="6">
    <source>
        <dbReference type="PDB" id="7XM0"/>
    </source>
</evidence>
<organism>
    <name type="scientific">Staphylococcus aureus</name>
    <dbReference type="NCBI Taxonomy" id="1280"/>
    <lineage>
        <taxon>Bacteria</taxon>
        <taxon>Bacillati</taxon>
        <taxon>Bacillota</taxon>
        <taxon>Bacilli</taxon>
        <taxon>Bacillales</taxon>
        <taxon>Staphylococcaceae</taxon>
        <taxon>Staphylococcus</taxon>
    </lineage>
</organism>
<gene>
    <name type="primary">sau3AIR</name>
</gene>
<keyword id="KW-0002">3D-structure</keyword>
<keyword id="KW-0255">Endonuclease</keyword>
<keyword id="KW-0378">Hydrolase</keyword>
<keyword id="KW-0460">Magnesium</keyword>
<keyword id="KW-0540">Nuclease</keyword>
<keyword id="KW-0680">Restriction system</keyword>
<dbReference type="EC" id="3.1.21.4" evidence="1"/>
<dbReference type="EMBL" id="M32470">
    <property type="protein sequence ID" value="AAA26672.1"/>
    <property type="molecule type" value="Genomic_DNA"/>
</dbReference>
<dbReference type="PIR" id="JQ0759">
    <property type="entry name" value="JQ0759"/>
</dbReference>
<dbReference type="RefSeq" id="WP_000446878.1">
    <property type="nucleotide sequence ID" value="NZ_WOUL01000015.1"/>
</dbReference>
<dbReference type="PDB" id="2REU">
    <property type="method" value="X-ray"/>
    <property type="resolution" value="1.90 A"/>
    <property type="chains" value="A=233-489"/>
</dbReference>
<dbReference type="PDB" id="4PXG">
    <property type="method" value="X-ray"/>
    <property type="resolution" value="2.45 A"/>
    <property type="chains" value="A/B=1-489"/>
</dbReference>
<dbReference type="PDB" id="7XM0">
    <property type="method" value="X-ray"/>
    <property type="resolution" value="2.60 A"/>
    <property type="chains" value="A/B/C=233-489"/>
</dbReference>
<dbReference type="PDBsum" id="2REU"/>
<dbReference type="PDBsum" id="4PXG"/>
<dbReference type="PDBsum" id="7XM0"/>
<dbReference type="SMR" id="P16667"/>
<dbReference type="REBASE" id="252065">
    <property type="entry name" value="Psp7025ORF2592P"/>
</dbReference>
<dbReference type="EvolutionaryTrace" id="P16667"/>
<dbReference type="PRO" id="PR:P16667"/>
<dbReference type="GO" id="GO:0003677">
    <property type="term" value="F:DNA binding"/>
    <property type="evidence" value="ECO:0007669"/>
    <property type="project" value="InterPro"/>
</dbReference>
<dbReference type="GO" id="GO:0009036">
    <property type="term" value="F:type II site-specific deoxyribonuclease activity"/>
    <property type="evidence" value="ECO:0007669"/>
    <property type="project" value="UniProtKB-EC"/>
</dbReference>
<dbReference type="GO" id="GO:0009307">
    <property type="term" value="P:DNA restriction-modification system"/>
    <property type="evidence" value="ECO:0007669"/>
    <property type="project" value="UniProtKB-KW"/>
</dbReference>
<dbReference type="CDD" id="cd22355">
    <property type="entry name" value="Sau3AI_C"/>
    <property type="match status" value="1"/>
</dbReference>
<dbReference type="CDD" id="cd22356">
    <property type="entry name" value="Sau3AI_N-like"/>
    <property type="match status" value="1"/>
</dbReference>
<dbReference type="Gene3D" id="3.40.600.10">
    <property type="entry name" value="DNA mismatch repair MutH/Restriction endonuclease, type II"/>
    <property type="match status" value="2"/>
</dbReference>
<dbReference type="InterPro" id="IPR011337">
    <property type="entry name" value="DNA_rep_MutH/RE_typeII_Sau3AI"/>
</dbReference>
<dbReference type="InterPro" id="IPR037057">
    <property type="entry name" value="DNA_rep_MutH/T2_RE_sf"/>
</dbReference>
<dbReference type="InterPro" id="IPR011335">
    <property type="entry name" value="Restrct_endonuc-II-like"/>
</dbReference>
<dbReference type="NCBIfam" id="NF040973">
    <property type="entry name" value="restrict_Sau3AI"/>
    <property type="match status" value="1"/>
</dbReference>
<dbReference type="Pfam" id="PF02976">
    <property type="entry name" value="MutH"/>
    <property type="match status" value="1"/>
</dbReference>
<dbReference type="SMART" id="SM00927">
    <property type="entry name" value="MutH"/>
    <property type="match status" value="1"/>
</dbReference>
<dbReference type="SUPFAM" id="SSF52980">
    <property type="entry name" value="Restriction endonuclease-like"/>
    <property type="match status" value="2"/>
</dbReference>
<comment type="function">
    <text evidence="1 2">An E and P subtype restriction enzyme that recognizes the double-stranded sequence 5'-GATC-3' and cleaves before G-1.</text>
</comment>
<comment type="catalytic activity">
    <reaction evidence="1">
        <text>Endonucleolytic cleavage of DNA to give specific double-stranded fragments with terminal 5'-phosphates.</text>
        <dbReference type="EC" id="3.1.21.4"/>
    </reaction>
</comment>
<comment type="cofactor">
    <cofactor>
        <name>Mg(2+)</name>
        <dbReference type="ChEBI" id="CHEBI:18420"/>
    </cofactor>
</comment>
<feature type="chain" id="PRO_0000077358" description="Type II restriction enzyme Sau3AI">
    <location>
        <begin position="1"/>
        <end position="489"/>
    </location>
</feature>
<feature type="helix" evidence="5">
    <location>
        <begin position="7"/>
        <end position="17"/>
    </location>
</feature>
<feature type="helix" evidence="5">
    <location>
        <begin position="22"/>
        <end position="26"/>
    </location>
</feature>
<feature type="helix" evidence="5">
    <location>
        <begin position="38"/>
        <end position="44"/>
    </location>
</feature>
<feature type="strand" evidence="5">
    <location>
        <begin position="64"/>
        <end position="72"/>
    </location>
</feature>
<feature type="strand" evidence="5">
    <location>
        <begin position="78"/>
        <end position="82"/>
    </location>
</feature>
<feature type="strand" evidence="5">
    <location>
        <begin position="84"/>
        <end position="88"/>
    </location>
</feature>
<feature type="helix" evidence="5">
    <location>
        <begin position="91"/>
        <end position="95"/>
    </location>
</feature>
<feature type="turn" evidence="5">
    <location>
        <begin position="99"/>
        <end position="101"/>
    </location>
</feature>
<feature type="helix" evidence="5">
    <location>
        <begin position="103"/>
        <end position="108"/>
    </location>
</feature>
<feature type="strand" evidence="5">
    <location>
        <begin position="109"/>
        <end position="117"/>
    </location>
</feature>
<feature type="helix" evidence="5">
    <location>
        <begin position="124"/>
        <end position="126"/>
    </location>
</feature>
<feature type="strand" evidence="5">
    <location>
        <begin position="128"/>
        <end position="136"/>
    </location>
</feature>
<feature type="turn" evidence="5">
    <location>
        <begin position="137"/>
        <end position="139"/>
    </location>
</feature>
<feature type="helix" evidence="5">
    <location>
        <begin position="141"/>
        <end position="159"/>
    </location>
</feature>
<feature type="helix" evidence="5">
    <location>
        <begin position="163"/>
        <end position="165"/>
    </location>
</feature>
<feature type="helix" evidence="5">
    <location>
        <begin position="168"/>
        <end position="170"/>
    </location>
</feature>
<feature type="strand" evidence="5">
    <location>
        <begin position="171"/>
        <end position="178"/>
    </location>
</feature>
<feature type="helix" evidence="5">
    <location>
        <begin position="183"/>
        <end position="185"/>
    </location>
</feature>
<feature type="strand" evidence="5">
    <location>
        <begin position="186"/>
        <end position="189"/>
    </location>
</feature>
<feature type="strand" evidence="5">
    <location>
        <begin position="192"/>
        <end position="197"/>
    </location>
</feature>
<feature type="strand" evidence="5">
    <location>
        <begin position="199"/>
        <end position="203"/>
    </location>
</feature>
<feature type="helix" evidence="5">
    <location>
        <begin position="205"/>
        <end position="215"/>
    </location>
</feature>
<feature type="helix" evidence="5">
    <location>
        <begin position="229"/>
        <end position="232"/>
    </location>
</feature>
<feature type="helix" evidence="4">
    <location>
        <begin position="237"/>
        <end position="245"/>
    </location>
</feature>
<feature type="helix" evidence="4">
    <location>
        <begin position="246"/>
        <end position="248"/>
    </location>
</feature>
<feature type="helix" evidence="4">
    <location>
        <begin position="253"/>
        <end position="259"/>
    </location>
</feature>
<feature type="helix" evidence="4">
    <location>
        <begin position="269"/>
        <end position="278"/>
    </location>
</feature>
<feature type="strand" evidence="6">
    <location>
        <begin position="285"/>
        <end position="287"/>
    </location>
</feature>
<feature type="helix" evidence="5">
    <location>
        <begin position="294"/>
        <end position="299"/>
    </location>
</feature>
<feature type="strand" evidence="4">
    <location>
        <begin position="301"/>
        <end position="308"/>
    </location>
</feature>
<feature type="strand" evidence="6">
    <location>
        <begin position="318"/>
        <end position="322"/>
    </location>
</feature>
<feature type="helix" evidence="4">
    <location>
        <begin position="325"/>
        <end position="329"/>
    </location>
</feature>
<feature type="helix" evidence="4">
    <location>
        <begin position="343"/>
        <end position="350"/>
    </location>
</feature>
<feature type="strand" evidence="4">
    <location>
        <begin position="352"/>
        <end position="360"/>
    </location>
</feature>
<feature type="strand" evidence="4">
    <location>
        <begin position="366"/>
        <end position="374"/>
    </location>
</feature>
<feature type="helix" evidence="4">
    <location>
        <begin position="378"/>
        <end position="382"/>
    </location>
</feature>
<feature type="helix" evidence="4">
    <location>
        <begin position="384"/>
        <end position="398"/>
    </location>
</feature>
<feature type="strand" evidence="4">
    <location>
        <begin position="401"/>
        <end position="406"/>
    </location>
</feature>
<feature type="strand" evidence="4">
    <location>
        <begin position="413"/>
        <end position="418"/>
    </location>
</feature>
<feature type="helix" evidence="4">
    <location>
        <begin position="423"/>
        <end position="425"/>
    </location>
</feature>
<feature type="strand" evidence="4">
    <location>
        <begin position="427"/>
        <end position="436"/>
    </location>
</feature>
<feature type="strand" evidence="4">
    <location>
        <begin position="440"/>
        <end position="443"/>
    </location>
</feature>
<feature type="strand" evidence="4">
    <location>
        <begin position="446"/>
        <end position="448"/>
    </location>
</feature>
<feature type="strand" evidence="4">
    <location>
        <begin position="454"/>
        <end position="457"/>
    </location>
</feature>
<feature type="strand" evidence="4">
    <location>
        <begin position="466"/>
        <end position="470"/>
    </location>
</feature>
<feature type="strand" evidence="4">
    <location>
        <begin position="472"/>
        <end position="476"/>
    </location>
</feature>
<feature type="helix" evidence="4">
    <location>
        <begin position="478"/>
        <end position="485"/>
    </location>
</feature>
<feature type="helix" evidence="4">
    <location>
        <begin position="486"/>
        <end position="488"/>
    </location>
</feature>
<sequence length="489" mass="56471">MESYLTKQAVHNRAKEAVGKSVLELNGGESIKQSKSSVGDAFENWFGKKKDSDSKPDMAEAGVELKATPFKKLKNGKYSSKERLVLNIINYEKVANENFETSSFLSKNNTIELAFYEYIKGTPSDNWIIKEAVLYEMHKNPIDYEIIKQDWEIINQYINEGKAHELSEGLTSYLAPCTKGANASSLRNQPYSDIKAKQRAFSLKSGYMTSILRKYVLGDEKIDSIVKDPFEIKEKSIEDIVFEKFQPYINWSIDKLCEHFSINKGEKGLNYRIASAILNLKGKTTKSKPFPEVEEFEKSSIVVKTVHFNKKNVNKESMSFGAFKFEELANEEWEDSEGYPSAQWRNFLLETRFLFFVVKEDEDGVDIFKGIKFFSMPEEDINGPVKRMWDDTVKKLKEGVTLEAVPDKSTKDGWRIKNNFVDKSDDLICHVRPHTNNRDYRGGSNADKLPKKINWINRPDSDDYSDEWMTKQSFWINNDYIKKQVEDLL</sequence>
<proteinExistence type="evidence at protein level"/>